<dbReference type="EC" id="3.4.22.-"/>
<dbReference type="EC" id="2.7.7.48" evidence="4"/>
<dbReference type="EC" id="3.6.1.15"/>
<dbReference type="EC" id="3.6.4.13"/>
<dbReference type="EMBL" id="AF188704">
    <property type="protein sequence ID" value="AAF26709.1"/>
    <property type="status" value="ALT_INIT"/>
    <property type="molecule type" value="Genomic_RNA"/>
</dbReference>
<dbReference type="SMR" id="Q9J6K9"/>
<dbReference type="IntAct" id="Q9J6K9">
    <property type="interactions" value="1"/>
</dbReference>
<dbReference type="MEROPS" id="C27.001"/>
<dbReference type="Proteomes" id="UP000008176">
    <property type="component" value="Genome"/>
</dbReference>
<dbReference type="GO" id="GO:0033644">
    <property type="term" value="C:host cell membrane"/>
    <property type="evidence" value="ECO:0007669"/>
    <property type="project" value="UniProtKB-SubCell"/>
</dbReference>
<dbReference type="GO" id="GO:0044220">
    <property type="term" value="C:host cell perinuclear region of cytoplasm"/>
    <property type="evidence" value="ECO:0007669"/>
    <property type="project" value="UniProtKB-SubCell"/>
</dbReference>
<dbReference type="GO" id="GO:0016020">
    <property type="term" value="C:membrane"/>
    <property type="evidence" value="ECO:0007669"/>
    <property type="project" value="UniProtKB-KW"/>
</dbReference>
<dbReference type="GO" id="GO:0005524">
    <property type="term" value="F:ATP binding"/>
    <property type="evidence" value="ECO:0007669"/>
    <property type="project" value="UniProtKB-KW"/>
</dbReference>
<dbReference type="GO" id="GO:0016887">
    <property type="term" value="F:ATP hydrolysis activity"/>
    <property type="evidence" value="ECO:0007669"/>
    <property type="project" value="RHEA"/>
</dbReference>
<dbReference type="GO" id="GO:0004197">
    <property type="term" value="F:cysteine-type endopeptidase activity"/>
    <property type="evidence" value="ECO:0007669"/>
    <property type="project" value="InterPro"/>
</dbReference>
<dbReference type="GO" id="GO:0046872">
    <property type="term" value="F:metal ion binding"/>
    <property type="evidence" value="ECO:0007669"/>
    <property type="project" value="UniProtKB-KW"/>
</dbReference>
<dbReference type="GO" id="GO:0008174">
    <property type="term" value="F:mRNA methyltransferase activity"/>
    <property type="evidence" value="ECO:0007669"/>
    <property type="project" value="InterPro"/>
</dbReference>
<dbReference type="GO" id="GO:0003723">
    <property type="term" value="F:RNA binding"/>
    <property type="evidence" value="ECO:0007669"/>
    <property type="project" value="InterPro"/>
</dbReference>
<dbReference type="GO" id="GO:0003724">
    <property type="term" value="F:RNA helicase activity"/>
    <property type="evidence" value="ECO:0007669"/>
    <property type="project" value="UniProtKB-EC"/>
</dbReference>
<dbReference type="GO" id="GO:0003968">
    <property type="term" value="F:RNA-directed RNA polymerase activity"/>
    <property type="evidence" value="ECO:0007669"/>
    <property type="project" value="UniProtKB-KW"/>
</dbReference>
<dbReference type="GO" id="GO:0006351">
    <property type="term" value="P:DNA-templated transcription"/>
    <property type="evidence" value="ECO:0007669"/>
    <property type="project" value="InterPro"/>
</dbReference>
<dbReference type="GO" id="GO:0016556">
    <property type="term" value="P:mRNA modification"/>
    <property type="evidence" value="ECO:0007669"/>
    <property type="project" value="InterPro"/>
</dbReference>
<dbReference type="GO" id="GO:0006508">
    <property type="term" value="P:proteolysis"/>
    <property type="evidence" value="ECO:0007669"/>
    <property type="project" value="UniProtKB-KW"/>
</dbReference>
<dbReference type="GO" id="GO:0006396">
    <property type="term" value="P:RNA processing"/>
    <property type="evidence" value="ECO:0007669"/>
    <property type="project" value="InterPro"/>
</dbReference>
<dbReference type="GO" id="GO:0039694">
    <property type="term" value="P:viral RNA genome replication"/>
    <property type="evidence" value="ECO:0007669"/>
    <property type="project" value="InterPro"/>
</dbReference>
<dbReference type="CDD" id="cd21557">
    <property type="entry name" value="Macro_X_Nsp3-like"/>
    <property type="match status" value="1"/>
</dbReference>
<dbReference type="CDD" id="cd23260">
    <property type="entry name" value="Matonaviridae_RdRp"/>
    <property type="match status" value="1"/>
</dbReference>
<dbReference type="Gene3D" id="3.40.220.10">
    <property type="entry name" value="Leucine Aminopeptidase, subunit E, domain 1"/>
    <property type="match status" value="1"/>
</dbReference>
<dbReference type="Gene3D" id="3.40.50.300">
    <property type="entry name" value="P-loop containing nucleotide triphosphate hydrolases"/>
    <property type="match status" value="1"/>
</dbReference>
<dbReference type="InterPro" id="IPR027351">
    <property type="entry name" value="(+)RNA_virus_helicase_core_dom"/>
</dbReference>
<dbReference type="InterPro" id="IPR002588">
    <property type="entry name" value="Alphavirus-like_MT_dom"/>
</dbReference>
<dbReference type="InterPro" id="IPR043502">
    <property type="entry name" value="DNA/RNA_pol_sf"/>
</dbReference>
<dbReference type="InterPro" id="IPR002589">
    <property type="entry name" value="Macro_dom"/>
</dbReference>
<dbReference type="InterPro" id="IPR043472">
    <property type="entry name" value="Macro_dom-like"/>
</dbReference>
<dbReference type="InterPro" id="IPR044371">
    <property type="entry name" value="Macro_X_NSP3-like"/>
</dbReference>
<dbReference type="InterPro" id="IPR047306">
    <property type="entry name" value="Matonaviridae_RdRp"/>
</dbReference>
<dbReference type="InterPro" id="IPR027417">
    <property type="entry name" value="P-loop_NTPase"/>
</dbReference>
<dbReference type="InterPro" id="IPR008738">
    <property type="entry name" value="Peptidase_C27"/>
</dbReference>
<dbReference type="InterPro" id="IPR001788">
    <property type="entry name" value="RNA-dep_RNA_pol_alsuvir"/>
</dbReference>
<dbReference type="InterPro" id="IPR007094">
    <property type="entry name" value="RNA-dir_pol_PSvirus"/>
</dbReference>
<dbReference type="InterPro" id="IPR022245">
    <property type="entry name" value="Rubi_NSP_C"/>
</dbReference>
<dbReference type="InterPro" id="IPR044070">
    <property type="entry name" value="RUBV_NS_PRO"/>
</dbReference>
<dbReference type="PANTHER" id="PTHR11106">
    <property type="entry name" value="GANGLIOSIDE INDUCED DIFFERENTIATION ASSOCIATED PROTEIN 2-RELATED"/>
    <property type="match status" value="1"/>
</dbReference>
<dbReference type="PANTHER" id="PTHR11106:SF27">
    <property type="entry name" value="MACRO DOMAIN-CONTAINING PROTEIN"/>
    <property type="match status" value="1"/>
</dbReference>
<dbReference type="Pfam" id="PF01661">
    <property type="entry name" value="Macro"/>
    <property type="match status" value="1"/>
</dbReference>
<dbReference type="Pfam" id="PF05407">
    <property type="entry name" value="Peptidase_C27"/>
    <property type="match status" value="1"/>
</dbReference>
<dbReference type="Pfam" id="PF00978">
    <property type="entry name" value="RdRP_2"/>
    <property type="match status" value="1"/>
</dbReference>
<dbReference type="Pfam" id="PF12601">
    <property type="entry name" value="Rubi_NSP_C"/>
    <property type="match status" value="1"/>
</dbReference>
<dbReference type="Pfam" id="PF01443">
    <property type="entry name" value="Viral_helicase1"/>
    <property type="match status" value="1"/>
</dbReference>
<dbReference type="SMART" id="SM00506">
    <property type="entry name" value="A1pp"/>
    <property type="match status" value="1"/>
</dbReference>
<dbReference type="SUPFAM" id="SSF56672">
    <property type="entry name" value="DNA/RNA polymerases"/>
    <property type="match status" value="1"/>
</dbReference>
<dbReference type="SUPFAM" id="SSF52949">
    <property type="entry name" value="Macro domain-like"/>
    <property type="match status" value="1"/>
</dbReference>
<dbReference type="SUPFAM" id="SSF52540">
    <property type="entry name" value="P-loop containing nucleoside triphosphate hydrolases"/>
    <property type="match status" value="1"/>
</dbReference>
<dbReference type="PROSITE" id="PS51743">
    <property type="entry name" value="ALPHAVIRUS_MT"/>
    <property type="match status" value="1"/>
</dbReference>
<dbReference type="PROSITE" id="PS51154">
    <property type="entry name" value="MACRO"/>
    <property type="match status" value="1"/>
</dbReference>
<dbReference type="PROSITE" id="PS51657">
    <property type="entry name" value="PSRV_HELICASE"/>
    <property type="match status" value="1"/>
</dbReference>
<dbReference type="PROSITE" id="PS50507">
    <property type="entry name" value="RDRP_SSRNA_POS"/>
    <property type="match status" value="1"/>
</dbReference>
<dbReference type="PROSITE" id="PS51889">
    <property type="entry name" value="RUBV_NS_PRO"/>
    <property type="match status" value="1"/>
</dbReference>
<protein>
    <recommendedName>
        <fullName>Non-structural polyprotein p200</fullName>
        <shortName>p200</shortName>
    </recommendedName>
    <component>
        <recommendedName>
            <fullName>Protease/methyltransferase p150</fullName>
            <shortName>p150</shortName>
            <ecNumber>3.4.22.-</ecNumber>
        </recommendedName>
    </component>
    <component>
        <recommendedName>
            <fullName>RNA-directed RNA polymerase p90</fullName>
            <shortName>p90</shortName>
            <ecNumber evidence="4">2.7.7.48</ecNumber>
            <ecNumber>3.6.1.15</ecNumber>
            <ecNumber>3.6.4.13</ecNumber>
        </recommendedName>
    </component>
</protein>
<organismHost>
    <name type="scientific">Homo sapiens</name>
    <name type="common">Human</name>
    <dbReference type="NCBI Taxonomy" id="9606"/>
</organismHost>
<accession>Q9J6K9</accession>
<organism>
    <name type="scientific">Rubella virus (strain Cendehill)</name>
    <name type="common">RUBV</name>
    <dbReference type="NCBI Taxonomy" id="376266"/>
    <lineage>
        <taxon>Viruses</taxon>
        <taxon>Riboviria</taxon>
        <taxon>Orthornavirae</taxon>
        <taxon>Kitrinoviricota</taxon>
        <taxon>Alsuviricetes</taxon>
        <taxon>Hepelivirales</taxon>
        <taxon>Matonaviridae</taxon>
        <taxon>Rubivirus</taxon>
        <taxon>Rubivirus rubellae</taxon>
    </lineage>
</organism>
<feature type="chain" id="PRO_0000240167" description="Non-structural polyprotein p200">
    <location>
        <begin position="1"/>
        <end position="2116"/>
    </location>
</feature>
<feature type="chain" id="PRO_0000240168" description="Protease/methyltransferase p150">
    <location>
        <begin position="1"/>
        <end position="1301"/>
    </location>
</feature>
<feature type="chain" id="PRO_0000240169" description="RNA-directed RNA polymerase p90">
    <location>
        <begin position="1302"/>
        <end position="2116"/>
    </location>
</feature>
<feature type="domain" description="Alphavirus-like MT" evidence="6">
    <location>
        <begin position="57"/>
        <end position="247"/>
    </location>
</feature>
<feature type="domain" description="Macro" evidence="3">
    <location>
        <begin position="806"/>
        <end position="985"/>
    </location>
</feature>
<feature type="domain" description="Peptidase C27" evidence="7">
    <location>
        <begin position="1000"/>
        <end position="1301"/>
    </location>
</feature>
<feature type="domain" description="(+)RNA virus helicase ATP-binding" evidence="5">
    <location>
        <begin position="1320"/>
        <end position="1468"/>
    </location>
</feature>
<feature type="domain" description="(+)RNA virus helicase C-terminal" evidence="5">
    <location>
        <begin position="1469"/>
        <end position="1609"/>
    </location>
</feature>
<feature type="domain" description="RdRp catalytic" evidence="4">
    <location>
        <begin position="1870"/>
        <end position="1981"/>
    </location>
</feature>
<feature type="region of interest" description="Required for efficient proteolysis and P150-P90 interaction" evidence="2">
    <location>
        <begin position="36"/>
        <end position="49"/>
    </location>
</feature>
<feature type="region of interest" description="Disordered" evidence="8">
    <location>
        <begin position="715"/>
        <end position="782"/>
    </location>
</feature>
<feature type="region of interest" description="Disordered" evidence="8">
    <location>
        <begin position="991"/>
        <end position="1030"/>
    </location>
</feature>
<feature type="region of interest" description="Interaction with host CALM1" evidence="7">
    <location>
        <begin position="1152"/>
        <end position="1183"/>
    </location>
</feature>
<feature type="region of interest" description="EF-hand-like" evidence="7">
    <location>
        <begin position="1193"/>
        <end position="1228"/>
    </location>
</feature>
<feature type="region of interest" description="Involved in P150-P90 interaction" evidence="2">
    <location>
        <begin position="1700"/>
        <end position="1900"/>
    </location>
</feature>
<feature type="short sequence motif" description="PxxPxR; class II SH3-binding" evidence="2">
    <location>
        <begin position="727"/>
        <end position="732"/>
    </location>
</feature>
<feature type="short sequence motif" description="PxxPxR; class II SH3-binding" evidence="2">
    <location>
        <begin position="747"/>
        <end position="752"/>
    </location>
</feature>
<feature type="short sequence motif" description="PxxPxR; class II SH3-binding" evidence="2">
    <location>
        <begin position="761"/>
        <end position="766"/>
    </location>
</feature>
<feature type="short sequence motif" description="Human RB1 binding" evidence="2">
    <location>
        <begin position="1902"/>
        <end position="1906"/>
    </location>
</feature>
<feature type="compositionally biased region" description="Pro residues" evidence="8">
    <location>
        <begin position="721"/>
        <end position="730"/>
    </location>
</feature>
<feature type="compositionally biased region" description="Pro residues" evidence="8">
    <location>
        <begin position="745"/>
        <end position="776"/>
    </location>
</feature>
<feature type="active site" description="For cysteine protease activity" evidence="7">
    <location>
        <position position="1152"/>
    </location>
</feature>
<feature type="active site" description="For cysteine protease activity" evidence="7">
    <location>
        <position position="1273"/>
    </location>
</feature>
<feature type="binding site" evidence="7">
    <location>
        <position position="1175"/>
    </location>
    <ligand>
        <name>Zn(2+)</name>
        <dbReference type="ChEBI" id="CHEBI:29105"/>
    </ligand>
</feature>
<feature type="binding site" evidence="7">
    <location>
        <position position="1178"/>
    </location>
    <ligand>
        <name>Zn(2+)</name>
        <dbReference type="ChEBI" id="CHEBI:29105"/>
    </ligand>
</feature>
<feature type="binding site" evidence="7">
    <location>
        <position position="1227"/>
    </location>
    <ligand>
        <name>Zn(2+)</name>
        <dbReference type="ChEBI" id="CHEBI:29105"/>
    </ligand>
</feature>
<feature type="binding site" evidence="7">
    <location>
        <position position="1273"/>
    </location>
    <ligand>
        <name>Zn(2+)</name>
        <dbReference type="ChEBI" id="CHEBI:29105"/>
    </ligand>
</feature>
<feature type="binding site" evidence="5">
    <location>
        <begin position="1352"/>
        <end position="1359"/>
    </location>
    <ligand>
        <name>a ribonucleoside 5'-triphosphate</name>
        <dbReference type="ChEBI" id="CHEBI:61557"/>
    </ligand>
</feature>
<feature type="site" description="Cleavage; autocatalytic" evidence="7">
    <location>
        <begin position="1301"/>
        <end position="1302"/>
    </location>
</feature>
<reference key="1">
    <citation type="journal article" date="2000" name="J. Virol.">
        <title>Mapping of genetic determinants of rubella virus associated with growth in joint tissue.</title>
        <authorList>
            <person name="Lund K.D."/>
            <person name="Chantler J.K."/>
        </authorList>
    </citation>
    <scope>NUCLEOTIDE SEQUENCE [GENOMIC RNA]</scope>
</reference>
<name>POLN_RUBVD</name>
<proteinExistence type="inferred from homology"/>
<evidence type="ECO:0000250" key="1">
    <source>
        <dbReference type="UniProtKB" id="P13889"/>
    </source>
</evidence>
<evidence type="ECO:0000250" key="2">
    <source>
        <dbReference type="UniProtKB" id="Q86500"/>
    </source>
</evidence>
<evidence type="ECO:0000255" key="3">
    <source>
        <dbReference type="PROSITE-ProRule" id="PRU00490"/>
    </source>
</evidence>
<evidence type="ECO:0000255" key="4">
    <source>
        <dbReference type="PROSITE-ProRule" id="PRU00539"/>
    </source>
</evidence>
<evidence type="ECO:0000255" key="5">
    <source>
        <dbReference type="PROSITE-ProRule" id="PRU00990"/>
    </source>
</evidence>
<evidence type="ECO:0000255" key="6">
    <source>
        <dbReference type="PROSITE-ProRule" id="PRU01079"/>
    </source>
</evidence>
<evidence type="ECO:0000255" key="7">
    <source>
        <dbReference type="PROSITE-ProRule" id="PRU01237"/>
    </source>
</evidence>
<evidence type="ECO:0000256" key="8">
    <source>
        <dbReference type="SAM" id="MobiDB-lite"/>
    </source>
</evidence>
<evidence type="ECO:0000305" key="9"/>
<comment type="function">
    <molecule>Non-structural polyprotein p200</molecule>
    <text evidence="2">Probable principal replicase for the negative-strand DNA, which replicates the 40S (+) genomic RNA into (-) antigenomic RNA. It cannot replicate the (-) into (+) until cleaved into p150 and p90 mature proteins.</text>
</comment>
<comment type="function">
    <molecule>Protease/methyltransferase p150</molecule>
    <text evidence="2">Protease that cleaves the precursor polyprotein into two mature products. Together with RNA-directed RNA polymerase p90, replicates the 40S genomic and antigenomic RNA by recognizing replications specific signals. The heterodimer P150/p90 is probably the principal replicase for positive-strand genomic RNA and the 24S subgenomic RNA, which codes for structural proteins. Responsible for the mRNA-capping of the viral mRNAs. This function is necessary since all viral RNAs are synthesized in the cytoplasm, and host capping enzymes are restricted to the nucleus. Forms fibers late in the infection that may be involved in cell-to-cell spread of the virus RNA in the absence of virus particle formation.</text>
</comment>
<comment type="function">
    <molecule>RNA-directed RNA polymerase p90</molecule>
    <text evidence="2">Together with protease/methyltransferase p150, replicates the 40S genomic and antigenomic RNA by recognizing replications specific signals. The heterodimer P150/p90 is probably the principal replicase for positive-strand genomic RNA and the 24S subgenomic RNA, which codes for structural proteins. A helicase activity is probably also present.</text>
</comment>
<comment type="catalytic activity">
    <reaction evidence="2 4">
        <text>RNA(n) + a ribonucleoside 5'-triphosphate = RNA(n+1) + diphosphate</text>
        <dbReference type="Rhea" id="RHEA:21248"/>
        <dbReference type="Rhea" id="RHEA-COMP:14527"/>
        <dbReference type="Rhea" id="RHEA-COMP:17342"/>
        <dbReference type="ChEBI" id="CHEBI:33019"/>
        <dbReference type="ChEBI" id="CHEBI:61557"/>
        <dbReference type="ChEBI" id="CHEBI:140395"/>
        <dbReference type="EC" id="2.7.7.48"/>
    </reaction>
</comment>
<comment type="catalytic activity">
    <reaction evidence="2">
        <text>a ribonucleoside 5'-triphosphate + H2O = a ribonucleoside 5'-diphosphate + phosphate + H(+)</text>
        <dbReference type="Rhea" id="RHEA:23680"/>
        <dbReference type="ChEBI" id="CHEBI:15377"/>
        <dbReference type="ChEBI" id="CHEBI:15378"/>
        <dbReference type="ChEBI" id="CHEBI:43474"/>
        <dbReference type="ChEBI" id="CHEBI:57930"/>
        <dbReference type="ChEBI" id="CHEBI:61557"/>
        <dbReference type="EC" id="3.6.1.15"/>
    </reaction>
</comment>
<comment type="catalytic activity">
    <reaction evidence="2">
        <text>ATP + H2O = ADP + phosphate + H(+)</text>
        <dbReference type="Rhea" id="RHEA:13065"/>
        <dbReference type="ChEBI" id="CHEBI:15377"/>
        <dbReference type="ChEBI" id="CHEBI:15378"/>
        <dbReference type="ChEBI" id="CHEBI:30616"/>
        <dbReference type="ChEBI" id="CHEBI:43474"/>
        <dbReference type="ChEBI" id="CHEBI:456216"/>
        <dbReference type="EC" id="3.6.4.13"/>
    </reaction>
</comment>
<comment type="cofactor">
    <cofactor evidence="7">
        <name>Zn(2+)</name>
        <dbReference type="ChEBI" id="CHEBI:29105"/>
    </cofactor>
    <text evidence="7">Zn(2+) is necessary for the protease activity. The protease can also function efficiently with Cd(2+) and Co(2+).</text>
</comment>
<comment type="subunit">
    <molecule>Protease/methyltransferase p150</molecule>
    <text evidence="9">Interacts with RNA-directed RNA polymerase p90. Interacts with host CALM1; this interaction is necessary for the protease activity and viral infectivity. Interacts with host C1QBP. Interacts with the capsid protein.</text>
</comment>
<comment type="subunit">
    <molecule>RNA-directed RNA polymerase p90</molecule>
    <text evidence="2">Interacts with human RB1/retinoblastoma protein. Interacts with protease/methyltransferase p150.</text>
</comment>
<comment type="subcellular location">
    <molecule>Non-structural polyprotein p200</molecule>
    <subcellularLocation>
        <location evidence="2">Host membrane</location>
    </subcellularLocation>
    <subcellularLocation>
        <location evidence="2">Host cytoplasm</location>
        <location evidence="2">Host perinuclear region</location>
    </subcellularLocation>
    <subcellularLocation>
        <location evidence="2">Host cytoplasm</location>
    </subcellularLocation>
    <text evidence="2">Localizes to cytoplasmic foci at 24 hpi.</text>
</comment>
<comment type="subcellular location">
    <molecule>Protease/methyltransferase p150</molecule>
    <subcellularLocation>
        <location evidence="2">Host membrane</location>
    </subcellularLocation>
    <subcellularLocation>
        <location evidence="2">Host cytoplasm</location>
        <location evidence="2">Host perinuclear region</location>
    </subcellularLocation>
    <subcellularLocation>
        <location evidence="2">Host cytoplasm</location>
    </subcellularLocation>
    <text evidence="1 2">At 36 hpi, localizes to the host cytoplasm, probably in vesicles inside host vacuoles of endosomal and lysosomal origin (By similarity). At 72 hpi, localizes to filamentous structures in the host cytoplasm (By similarity).</text>
</comment>
<comment type="subcellular location">
    <molecule>RNA-directed RNA polymerase p90</molecule>
    <subcellularLocation>
        <location evidence="2">Host membrane</location>
    </subcellularLocation>
    <subcellularLocation>
        <location evidence="2">Host cytoplasm</location>
    </subcellularLocation>
    <text evidence="2">Localizes to the cytoplasm and to the cytoplasmic fibers formed by protease/methyltransferase p150.</text>
</comment>
<comment type="domain">
    <molecule>Protease/methyltransferase p150</molecule>
    <text evidence="2">The N-terminus has a methyltransferase activity for mRNA-capping. The C-terminus harbors a protease active in cis or in trans which specifically cleaves and releases the two mature proteins. Both the N-terminus and C-terminus are required for fiber formation. The N-terminus is involved in associating with membranes. An EF-hand Ca(2+)-binding motif is present in the protease. Also contains 3 SH3-binding motifs that are responsible for the interaction with host C1QBP.</text>
</comment>
<comment type="PTM">
    <molecule>Non-structural polyprotein p200</molecule>
    <text evidence="2">Specific enzymatic cleavage by its own cysteine protease yield mature proteins p150 and p90.</text>
</comment>
<comment type="miscellaneous">
    <text evidence="2">Rubella virus in utero infection has frequently severe consequences on normal fetal development, collectively known as congenital rubella syndrome (CRS). The teratogenicity of the virus is possibly due to the interaction between the p90 protein and the human RB1/retinoblastoma protein.</text>
</comment>
<comment type="sequence caution" evidence="9">
    <conflict type="erroneous initiation">
        <sequence resource="EMBL-CDS" id="AAF26709"/>
    </conflict>
</comment>
<sequence length="2116" mass="230510">MEKLLDEVLAPGGPYNLTVGSWVRDHVRSIVEGAWEVRDVVTAAQKRAIVAVIPRPVFTQMQVSDHPALHAISRYTRRHWIEWGPKEALHVLIDPSPGLLREVARVERRWVALCLHRTARKLATALAETASEAWHADYVCALRGAPSGPFYVHPEDVPHGGRAVADRCLLYYTPMQMCELMRTIDATLLVAVDLWPVALAAHVGDDWDDLGIAWHLDHDGGCPADCRGAGAGPTPGYTRPCTTRIYQVLPDTAHPGRLYRCGPRLWTRDCAVAELSWEVAQHCGHQARVRAVRCTLPIRHVRSLQPSARVRLPDLVHLAEVGRWRWFSLPRPVFQRMLSYCKTLSPDAYYSERVFKFKNALSHSITLAGNVLQEGWKGTCAEEDALCAYVAFRAWQSNARLAGIMKGAKRCAADSLSVAGWLDTIWDAIKRFFGSVPLAERMEEWEQDAAVAAFDRGPLEDGGRHLDTVQPPKSPPRPEIAATWIVHAASADRHCACAPRCDVPRERPSAPAGQPDDEALIPPWLFAERRALRCREWDFEALRARADTAAAPAPLAPRPARYPTVLYRHPAHHGPWLTLDEPGEADAALVLCDPLGQPLRGPERHFAAGAHMCAQARGLQAFVRVVPPPERPWADGGARAWAKFFRGCAWAQRLLGEPAVMHLPYTDGDVPQLIALALRTLAQQGAALALSVRDLPGGAAFDANAVTAAVRAGPGQLAATSPPPGDPPPPRRARRSQRHSDARGTPPPAPVRDPPPPAPSPPAPPRAGDPVPPTPAEPADRARDAELEVAYEPSGPPTSTKADPDSDIVESYARAAGPVHLRVRDIMDPPPGCKVVVNAANEGLLAGSGVCGAIFANATAALAADCRRLAPCPTGEAVATPGHGCGYTHIIHAVAPRRPRDPAALEEGEALLERAYRSIVALAAARRWAYVACPLLGAGVYGWSAAESLRAALAATRAEPVERVSLHICHPDRATLTHASVLVGAGLAARRVSPPPTEPLASCPAGGPGRPAQRSASPPATPLGDATAPEPRGCQGCELCRHTRVTNDRAYVNLWLERDRGATSWAMRIPEVVVYGPEHLATHFPLNHYSVLKPAEVRPPRGMCGSDMWRCRGWQGMPQVRCTPSNAHAALCRTGVPPRVSTRGGELDPNTCWLRAAANVAQVARACGAYTSAGCPKCAYGRALSEARTHEDFAALSQRWSASHADASPDGTGDPLDPLMETVGCACSRVWVGSEQEAPPDHLLVSLHRAPNGPWGVVLEVRARPEGGNPTGHFVCAVGGGPRRVSDRPHLWLAVPLSRGGGTCAATDEGLAQAYYDDLEVRRLGDDAMARAALASVQRPRKGPYNIRVWNMAAGAGKTTRILAAFTREDLYVCPTNALLHEIQAKLRARDIDIKNAATYERALTKPLAAYRRIYIDEAFTLGGEYCAFVASQTTAEVICVGDRDQCGPHYANNCRTPVPDRWPTERSRHTWRFPDCWAARLRAGLDYDIEGERTGIFACNLWDGRQVDLHLAFSRETVRRLHEAGIRAYTVREAQGMSVGTACIHVGRDGTDVALALTRDLAIVSLTRASDALYLHELEDGSLRAAGLSAFLDAGALAELKEVPAGIDRVVAVEQAPPPLPPADGIPEAQDVPPFCPRTLEELVFGRAGHPHYADLNRVTEGEREVRYMRISRHLLNKNHTEMPGTERVLSAVCAVRRYRAGEDGSTLRTAVARQHPRPFRQIPPPRVTAGVAQEWRMTYLRERIDLTDVYTQMGVAARELTDRYARRYPEIFAGMCTAQSLSVPAFLKATLKCVDAALGPRDTEDCHAAQGKAGLEIRAWAKEWVQVMSPHFRAIQKIIMRALRPQFLVAAGHTEPEVDAWWQAHYTTNAIEVDFTEFDMNQTLATRDVELEISAALLGLPCAEDYRALRAGSYCTLRELGSTETGCERTSGEPATLLHNTTVAMCMAMRMVPKGVRWAGIFQGDDMVIFLPEGARSAALKWTPAEVGLFGFHIPVKHVSTPTPSFCGHVGTAAGLFHDVMHQAIKVLCRRFDPDVLEEQQVALLDRLRGVYAALPDTVAANAAYYDYSAERVLAIVRELTAYARGRGLDHPATIGALEEIQTPYARANLHDAD</sequence>
<keyword id="KW-0067">ATP-binding</keyword>
<keyword id="KW-0106">Calcium</keyword>
<keyword id="KW-0347">Helicase</keyword>
<keyword id="KW-1035">Host cytoplasm</keyword>
<keyword id="KW-1043">Host membrane</keyword>
<keyword id="KW-0378">Hydrolase</keyword>
<keyword id="KW-0472">Membrane</keyword>
<keyword id="KW-0479">Metal-binding</keyword>
<keyword id="KW-0547">Nucleotide-binding</keyword>
<keyword id="KW-0548">Nucleotidyltransferase</keyword>
<keyword id="KW-0645">Protease</keyword>
<keyword id="KW-0696">RNA-directed RNA polymerase</keyword>
<keyword id="KW-0788">Thiol protease</keyword>
<keyword id="KW-0808">Transferase</keyword>
<keyword id="KW-0693">Viral RNA replication</keyword>
<keyword id="KW-0862">Zinc</keyword>